<keyword id="KW-0249">Electron transport</keyword>
<keyword id="KW-0349">Heme</keyword>
<keyword id="KW-0408">Iron</keyword>
<keyword id="KW-0472">Membrane</keyword>
<keyword id="KW-0479">Metal-binding</keyword>
<keyword id="KW-0496">Mitochondrion</keyword>
<keyword id="KW-0999">Mitochondrion inner membrane</keyword>
<keyword id="KW-0679">Respiratory chain</keyword>
<keyword id="KW-0812">Transmembrane</keyword>
<keyword id="KW-1133">Transmembrane helix</keyword>
<keyword id="KW-0813">Transport</keyword>
<keyword id="KW-0830">Ubiquinone</keyword>
<proteinExistence type="inferred from homology"/>
<reference key="1">
    <citation type="journal article" date="2005" name="Syst. Biol.">
        <title>Mitochondrial phylogenetics and evolution of mysticete whales.</title>
        <authorList>
            <person name="Sasaki T."/>
            <person name="Nikaido M."/>
            <person name="Hamilton H."/>
            <person name="Goto M."/>
            <person name="Kato H."/>
            <person name="Kanda N."/>
            <person name="Pastene L.A."/>
            <person name="Cao Y."/>
            <person name="Fordyce R.E."/>
            <person name="Hasegawa M."/>
            <person name="Okada N."/>
        </authorList>
    </citation>
    <scope>NUCLEOTIDE SEQUENCE [GENOMIC DNA]</scope>
</reference>
<name>CYB_EUBJA</name>
<comment type="function">
    <text evidence="2">Component of the ubiquinol-cytochrome c reductase complex (complex III or cytochrome b-c1 complex) that is part of the mitochondrial respiratory chain. The b-c1 complex mediates electron transfer from ubiquinol to cytochrome c. Contributes to the generation of a proton gradient across the mitochondrial membrane that is then used for ATP synthesis.</text>
</comment>
<comment type="cofactor">
    <cofactor evidence="2">
        <name>heme b</name>
        <dbReference type="ChEBI" id="CHEBI:60344"/>
    </cofactor>
    <text evidence="2">Binds 2 heme b groups non-covalently.</text>
</comment>
<comment type="subunit">
    <text evidence="2">The cytochrome bc1 complex contains 11 subunits: 3 respiratory subunits (MT-CYB, CYC1 and UQCRFS1), 2 core proteins (UQCRC1 and UQCRC2) and 6 low-molecular weight proteins (UQCRH/QCR6, UQCRB/QCR7, UQCRQ/QCR8, UQCR10/QCR9, UQCR11/QCR10 and a cleavage product of UQCRFS1). This cytochrome bc1 complex then forms a dimer.</text>
</comment>
<comment type="subcellular location">
    <subcellularLocation>
        <location evidence="2">Mitochondrion inner membrane</location>
        <topology evidence="2">Multi-pass membrane protein</topology>
    </subcellularLocation>
</comment>
<comment type="miscellaneous">
    <text evidence="1">Heme 1 (or BL or b562) is low-potential and absorbs at about 562 nm, and heme 2 (or BH or b566) is high-potential and absorbs at about 566 nm.</text>
</comment>
<comment type="similarity">
    <text evidence="3 4">Belongs to the cytochrome b family.</text>
</comment>
<comment type="caution">
    <text evidence="2">The full-length protein contains only eight transmembrane helices, not nine as predicted by bioinformatics tools.</text>
</comment>
<geneLocation type="mitochondrion"/>
<feature type="chain" id="PRO_0000060950" description="Cytochrome b">
    <location>
        <begin position="1"/>
        <end position="379"/>
    </location>
</feature>
<feature type="transmembrane region" description="Helical" evidence="2">
    <location>
        <begin position="33"/>
        <end position="53"/>
    </location>
</feature>
<feature type="transmembrane region" description="Helical" evidence="2">
    <location>
        <begin position="77"/>
        <end position="98"/>
    </location>
</feature>
<feature type="transmembrane region" description="Helical" evidence="2">
    <location>
        <begin position="113"/>
        <end position="133"/>
    </location>
</feature>
<feature type="transmembrane region" description="Helical" evidence="2">
    <location>
        <begin position="178"/>
        <end position="198"/>
    </location>
</feature>
<feature type="transmembrane region" description="Helical" evidence="2">
    <location>
        <begin position="226"/>
        <end position="246"/>
    </location>
</feature>
<feature type="transmembrane region" description="Helical" evidence="2">
    <location>
        <begin position="288"/>
        <end position="308"/>
    </location>
</feature>
<feature type="transmembrane region" description="Helical" evidence="2">
    <location>
        <begin position="320"/>
        <end position="340"/>
    </location>
</feature>
<feature type="transmembrane region" description="Helical" evidence="2">
    <location>
        <begin position="347"/>
        <end position="367"/>
    </location>
</feature>
<feature type="binding site" description="axial binding residue" evidence="2">
    <location>
        <position position="83"/>
    </location>
    <ligand>
        <name>heme b</name>
        <dbReference type="ChEBI" id="CHEBI:60344"/>
        <label>b562</label>
    </ligand>
    <ligandPart>
        <name>Fe</name>
        <dbReference type="ChEBI" id="CHEBI:18248"/>
    </ligandPart>
</feature>
<feature type="binding site" description="axial binding residue" evidence="2">
    <location>
        <position position="97"/>
    </location>
    <ligand>
        <name>heme b</name>
        <dbReference type="ChEBI" id="CHEBI:60344"/>
        <label>b566</label>
    </ligand>
    <ligandPart>
        <name>Fe</name>
        <dbReference type="ChEBI" id="CHEBI:18248"/>
    </ligandPart>
</feature>
<feature type="binding site" description="axial binding residue" evidence="2">
    <location>
        <position position="182"/>
    </location>
    <ligand>
        <name>heme b</name>
        <dbReference type="ChEBI" id="CHEBI:60344"/>
        <label>b562</label>
    </ligand>
    <ligandPart>
        <name>Fe</name>
        <dbReference type="ChEBI" id="CHEBI:18248"/>
    </ligandPart>
</feature>
<feature type="binding site" description="axial binding residue" evidence="2">
    <location>
        <position position="196"/>
    </location>
    <ligand>
        <name>heme b</name>
        <dbReference type="ChEBI" id="CHEBI:60344"/>
        <label>b566</label>
    </ligand>
    <ligandPart>
        <name>Fe</name>
        <dbReference type="ChEBI" id="CHEBI:18248"/>
    </ligandPart>
</feature>
<feature type="binding site" evidence="2">
    <location>
        <position position="201"/>
    </location>
    <ligand>
        <name>a ubiquinone</name>
        <dbReference type="ChEBI" id="CHEBI:16389"/>
    </ligand>
</feature>
<dbReference type="EMBL" id="AP006474">
    <property type="protein sequence ID" value="BAD91784.1"/>
    <property type="molecule type" value="Genomic_DNA"/>
</dbReference>
<dbReference type="RefSeq" id="YP_220783.1">
    <property type="nucleotide sequence ID" value="NC_006931.1"/>
</dbReference>
<dbReference type="SMR" id="Q598T9"/>
<dbReference type="GeneID" id="3338402"/>
<dbReference type="CTD" id="4519"/>
<dbReference type="GO" id="GO:0005743">
    <property type="term" value="C:mitochondrial inner membrane"/>
    <property type="evidence" value="ECO:0007669"/>
    <property type="project" value="UniProtKB-SubCell"/>
</dbReference>
<dbReference type="GO" id="GO:0045275">
    <property type="term" value="C:respiratory chain complex III"/>
    <property type="evidence" value="ECO:0007669"/>
    <property type="project" value="InterPro"/>
</dbReference>
<dbReference type="GO" id="GO:0046872">
    <property type="term" value="F:metal ion binding"/>
    <property type="evidence" value="ECO:0007669"/>
    <property type="project" value="UniProtKB-KW"/>
</dbReference>
<dbReference type="GO" id="GO:0008121">
    <property type="term" value="F:ubiquinol-cytochrome-c reductase activity"/>
    <property type="evidence" value="ECO:0007669"/>
    <property type="project" value="InterPro"/>
</dbReference>
<dbReference type="GO" id="GO:0006122">
    <property type="term" value="P:mitochondrial electron transport, ubiquinol to cytochrome c"/>
    <property type="evidence" value="ECO:0007669"/>
    <property type="project" value="TreeGrafter"/>
</dbReference>
<dbReference type="CDD" id="cd00290">
    <property type="entry name" value="cytochrome_b_C"/>
    <property type="match status" value="1"/>
</dbReference>
<dbReference type="CDD" id="cd00284">
    <property type="entry name" value="Cytochrome_b_N"/>
    <property type="match status" value="1"/>
</dbReference>
<dbReference type="FunFam" id="1.20.810.10:FF:000002">
    <property type="entry name" value="Cytochrome b"/>
    <property type="match status" value="1"/>
</dbReference>
<dbReference type="Gene3D" id="1.20.810.10">
    <property type="entry name" value="Cytochrome Bc1 Complex, Chain C"/>
    <property type="match status" value="1"/>
</dbReference>
<dbReference type="InterPro" id="IPR005798">
    <property type="entry name" value="Cyt_b/b6_C"/>
</dbReference>
<dbReference type="InterPro" id="IPR036150">
    <property type="entry name" value="Cyt_b/b6_C_sf"/>
</dbReference>
<dbReference type="InterPro" id="IPR005797">
    <property type="entry name" value="Cyt_b/b6_N"/>
</dbReference>
<dbReference type="InterPro" id="IPR027387">
    <property type="entry name" value="Cytb/b6-like_sf"/>
</dbReference>
<dbReference type="InterPro" id="IPR030689">
    <property type="entry name" value="Cytochrome_b"/>
</dbReference>
<dbReference type="InterPro" id="IPR048260">
    <property type="entry name" value="Cytochrome_b_C_euk/bac"/>
</dbReference>
<dbReference type="InterPro" id="IPR048259">
    <property type="entry name" value="Cytochrome_b_N_euk/bac"/>
</dbReference>
<dbReference type="InterPro" id="IPR016174">
    <property type="entry name" value="Di-haem_cyt_TM"/>
</dbReference>
<dbReference type="PANTHER" id="PTHR19271">
    <property type="entry name" value="CYTOCHROME B"/>
    <property type="match status" value="1"/>
</dbReference>
<dbReference type="PANTHER" id="PTHR19271:SF16">
    <property type="entry name" value="CYTOCHROME B"/>
    <property type="match status" value="1"/>
</dbReference>
<dbReference type="Pfam" id="PF00032">
    <property type="entry name" value="Cytochrom_B_C"/>
    <property type="match status" value="1"/>
</dbReference>
<dbReference type="Pfam" id="PF00033">
    <property type="entry name" value="Cytochrome_B"/>
    <property type="match status" value="1"/>
</dbReference>
<dbReference type="PIRSF" id="PIRSF038885">
    <property type="entry name" value="COB"/>
    <property type="match status" value="1"/>
</dbReference>
<dbReference type="SUPFAM" id="SSF81648">
    <property type="entry name" value="a domain/subunit of cytochrome bc1 complex (Ubiquinol-cytochrome c reductase)"/>
    <property type="match status" value="1"/>
</dbReference>
<dbReference type="SUPFAM" id="SSF81342">
    <property type="entry name" value="Transmembrane di-heme cytochromes"/>
    <property type="match status" value="1"/>
</dbReference>
<dbReference type="PROSITE" id="PS51003">
    <property type="entry name" value="CYTB_CTER"/>
    <property type="match status" value="1"/>
</dbReference>
<dbReference type="PROSITE" id="PS51002">
    <property type="entry name" value="CYTB_NTER"/>
    <property type="match status" value="1"/>
</dbReference>
<evidence type="ECO:0000250" key="1"/>
<evidence type="ECO:0000250" key="2">
    <source>
        <dbReference type="UniProtKB" id="P00157"/>
    </source>
</evidence>
<evidence type="ECO:0000255" key="3">
    <source>
        <dbReference type="PROSITE-ProRule" id="PRU00967"/>
    </source>
</evidence>
<evidence type="ECO:0000255" key="4">
    <source>
        <dbReference type="PROSITE-ProRule" id="PRU00968"/>
    </source>
</evidence>
<organism>
    <name type="scientific">Eubalaena japonica</name>
    <name type="common">North Pacific right whale</name>
    <dbReference type="NCBI Taxonomy" id="302098"/>
    <lineage>
        <taxon>Eukaryota</taxon>
        <taxon>Metazoa</taxon>
        <taxon>Chordata</taxon>
        <taxon>Craniata</taxon>
        <taxon>Vertebrata</taxon>
        <taxon>Euteleostomi</taxon>
        <taxon>Mammalia</taxon>
        <taxon>Eutheria</taxon>
        <taxon>Laurasiatheria</taxon>
        <taxon>Artiodactyla</taxon>
        <taxon>Whippomorpha</taxon>
        <taxon>Cetacea</taxon>
        <taxon>Mysticeti</taxon>
        <taxon>Balaenidae</taxon>
        <taxon>Eubalaena</taxon>
    </lineage>
</organism>
<gene>
    <name type="primary">MT-CYB</name>
    <name type="synonym">COB</name>
    <name type="synonym">CYTB</name>
    <name type="synonym">MTCYB</name>
</gene>
<accession>Q598T9</accession>
<protein>
    <recommendedName>
        <fullName>Cytochrome b</fullName>
    </recommendedName>
    <alternativeName>
        <fullName>Complex III subunit 3</fullName>
    </alternativeName>
    <alternativeName>
        <fullName>Complex III subunit III</fullName>
    </alternativeName>
    <alternativeName>
        <fullName>Cytochrome b-c1 complex subunit 3</fullName>
    </alternativeName>
    <alternativeName>
        <fullName>Ubiquinol-cytochrome-c reductase complex cytochrome b subunit</fullName>
    </alternativeName>
</protein>
<sequence length="379" mass="42875">MTNIRKTHPLMKIINDAFIDLPTPSNISSWWNFGSLLGLCLIMQILTGLFLAMHYTPDTTTAFSSITHICRDVNYGWIIRYLHANGASMFFICLYAHMGRGLYYGSYAFQETWNIGVILLFTVMATAFVGYVLPWGQMSFWGATVITNLLSAIPYIGNTLVEWIWGGFSVDKATLTRFFAFHFILPFIILALAIVHLLFLHETGSNNPTGIPSNMDKIPFHPYYTIKDILGALLLILTLLMLTLFAPDLLGDPDNYTPANPLSTPAHIKPEWYFLFAYAILRSIPNKLGGVLALLLSILILAFIPMLHTSKQRSMMFRPFSQFLFWVLVADLLTLTWIGGQPVEHPYVIVGQFASILYFLLILVLMPTASLIENKLMKW</sequence>